<comment type="similarity">
    <text evidence="2">Belongs to the eukaryotic ribosomal protein eL28 family.</text>
</comment>
<gene>
    <name type="primary">rpl-28</name>
    <name type="ORF">R11D1.8</name>
</gene>
<name>RL28_CAEEL</name>
<evidence type="ECO:0000269" key="1">
    <source ref="2"/>
</evidence>
<evidence type="ECO:0000305" key="2"/>
<organism>
    <name type="scientific">Caenorhabditis elegans</name>
    <dbReference type="NCBI Taxonomy" id="6239"/>
    <lineage>
        <taxon>Eukaryota</taxon>
        <taxon>Metazoa</taxon>
        <taxon>Ecdysozoa</taxon>
        <taxon>Nematoda</taxon>
        <taxon>Chromadorea</taxon>
        <taxon>Rhabditida</taxon>
        <taxon>Rhabditina</taxon>
        <taxon>Rhabditomorpha</taxon>
        <taxon>Rhabditoidea</taxon>
        <taxon>Rhabditidae</taxon>
        <taxon>Peloderinae</taxon>
        <taxon>Caenorhabditis</taxon>
    </lineage>
</organism>
<keyword id="KW-0007">Acetylation</keyword>
<keyword id="KW-0903">Direct protein sequencing</keyword>
<keyword id="KW-1185">Reference proteome</keyword>
<keyword id="KW-0687">Ribonucleoprotein</keyword>
<keyword id="KW-0689">Ribosomal protein</keyword>
<accession>Q21930</accession>
<feature type="initiator methionine" description="Removed" evidence="1">
    <location>
        <position position="1"/>
    </location>
</feature>
<feature type="chain" id="PRO_0000122393" description="Large ribosomal subunit protein eL28">
    <location>
        <begin position="2"/>
        <end position="126"/>
    </location>
</feature>
<feature type="modified residue" description="N-acetylserine" evidence="1">
    <location>
        <position position="2"/>
    </location>
</feature>
<proteinExistence type="evidence at protein level"/>
<protein>
    <recommendedName>
        <fullName evidence="2">Large ribosomal subunit protein eL28</fullName>
    </recommendedName>
    <alternativeName>
        <fullName>60S ribosomal protein L28</fullName>
    </alternativeName>
</protein>
<dbReference type="EMBL" id="Z75547">
    <property type="protein sequence ID" value="CAA99898.1"/>
    <property type="molecule type" value="Genomic_DNA"/>
</dbReference>
<dbReference type="PIR" id="T24181">
    <property type="entry name" value="T24181"/>
</dbReference>
<dbReference type="RefSeq" id="NP_001369954.1">
    <property type="nucleotide sequence ID" value="NM_001383425.2"/>
</dbReference>
<dbReference type="RefSeq" id="NP_506180.1">
    <property type="nucleotide sequence ID" value="NM_073779.5"/>
</dbReference>
<dbReference type="SMR" id="Q21930"/>
<dbReference type="BioGRID" id="44759">
    <property type="interactions" value="82"/>
</dbReference>
<dbReference type="DIP" id="DIP-24374N"/>
<dbReference type="FunCoup" id="Q21930">
    <property type="interactions" value="788"/>
</dbReference>
<dbReference type="IntAct" id="Q21930">
    <property type="interactions" value="1"/>
</dbReference>
<dbReference type="STRING" id="6239.R11D1.8.2"/>
<dbReference type="PaxDb" id="6239-R11D1.8.1"/>
<dbReference type="PeptideAtlas" id="Q21930"/>
<dbReference type="EnsemblMetazoa" id="R11D1.8.1">
    <property type="protein sequence ID" value="R11D1.8.1"/>
    <property type="gene ID" value="WBGene00004442"/>
</dbReference>
<dbReference type="EnsemblMetazoa" id="R11D1.8.2">
    <property type="protein sequence ID" value="R11D1.8.2"/>
    <property type="gene ID" value="WBGene00004442"/>
</dbReference>
<dbReference type="GeneID" id="179739"/>
<dbReference type="UCSC" id="R11D1.8.5">
    <property type="organism name" value="c. elegans"/>
</dbReference>
<dbReference type="AGR" id="WB:WBGene00004442"/>
<dbReference type="WormBase" id="R11D1.8">
    <property type="protein sequence ID" value="CE06313"/>
    <property type="gene ID" value="WBGene00004442"/>
    <property type="gene designation" value="rpl-28"/>
</dbReference>
<dbReference type="eggNOG" id="KOG3412">
    <property type="taxonomic scope" value="Eukaryota"/>
</dbReference>
<dbReference type="GeneTree" id="ENSGT00390000008732"/>
<dbReference type="HOGENOM" id="CLU_106801_1_0_1"/>
<dbReference type="InParanoid" id="Q21930"/>
<dbReference type="OMA" id="VWQVIRN"/>
<dbReference type="OrthoDB" id="338850at2759"/>
<dbReference type="PhylomeDB" id="Q21930"/>
<dbReference type="Reactome" id="R-CEL-156827">
    <property type="pathway name" value="L13a-mediated translational silencing of Ceruloplasmin expression"/>
</dbReference>
<dbReference type="Reactome" id="R-CEL-1799339">
    <property type="pathway name" value="SRP-dependent cotranslational protein targeting to membrane"/>
</dbReference>
<dbReference type="Reactome" id="R-CEL-72689">
    <property type="pathway name" value="Formation of a pool of free 40S subunits"/>
</dbReference>
<dbReference type="Reactome" id="R-CEL-72706">
    <property type="pathway name" value="GTP hydrolysis and joining of the 60S ribosomal subunit"/>
</dbReference>
<dbReference type="Reactome" id="R-CEL-975956">
    <property type="pathway name" value="Nonsense Mediated Decay (NMD) independent of the Exon Junction Complex (EJC)"/>
</dbReference>
<dbReference type="Reactome" id="R-CEL-975957">
    <property type="pathway name" value="Nonsense Mediated Decay (NMD) enhanced by the Exon Junction Complex (EJC)"/>
</dbReference>
<dbReference type="PRO" id="PR:Q21930"/>
<dbReference type="Proteomes" id="UP000001940">
    <property type="component" value="Chromosome V"/>
</dbReference>
<dbReference type="Bgee" id="WBGene00004442">
    <property type="expression patterns" value="Expressed in larva and 4 other cell types or tissues"/>
</dbReference>
<dbReference type="GO" id="GO:0022625">
    <property type="term" value="C:cytosolic large ribosomal subunit"/>
    <property type="evidence" value="ECO:0000318"/>
    <property type="project" value="GO_Central"/>
</dbReference>
<dbReference type="GO" id="GO:0003735">
    <property type="term" value="F:structural constituent of ribosome"/>
    <property type="evidence" value="ECO:0007669"/>
    <property type="project" value="InterPro"/>
</dbReference>
<dbReference type="GO" id="GO:0006412">
    <property type="term" value="P:translation"/>
    <property type="evidence" value="ECO:0007669"/>
    <property type="project" value="InterPro"/>
</dbReference>
<dbReference type="FunFam" id="3.30.390.110:FF:000005">
    <property type="entry name" value="60S ribosomal protein L28"/>
    <property type="match status" value="1"/>
</dbReference>
<dbReference type="Gene3D" id="3.30.390.110">
    <property type="match status" value="1"/>
</dbReference>
<dbReference type="InterPro" id="IPR002672">
    <property type="entry name" value="Ribosomal_eL28"/>
</dbReference>
<dbReference type="InterPro" id="IPR029004">
    <property type="entry name" value="Ribosomal_eL28/Mak16"/>
</dbReference>
<dbReference type="PANTHER" id="PTHR10544">
    <property type="entry name" value="60S RIBOSOMAL PROTEIN L28"/>
    <property type="match status" value="1"/>
</dbReference>
<dbReference type="Pfam" id="PF01778">
    <property type="entry name" value="Ribosomal_L28e"/>
    <property type="match status" value="1"/>
</dbReference>
<sequence>MSDALVWQVIRNNSAFLRTQRGIGKRFSTEKFNLKKVNSPKYSGLANKHAIDVSAAAKGVVVSTKNEKGRPAKAVTTSTLSKTPVASVRRLAKNAGFNKFNKLAQRRAAAIVRSQVKKAKVQKTDA</sequence>
<reference key="1">
    <citation type="journal article" date="1998" name="Science">
        <title>Genome sequence of the nematode C. elegans: a platform for investigating biology.</title>
        <authorList>
            <consortium name="The C. elegans sequencing consortium"/>
        </authorList>
    </citation>
    <scope>NUCLEOTIDE SEQUENCE [LARGE SCALE GENOMIC DNA]</scope>
    <source>
        <strain>Bristol N2</strain>
    </source>
</reference>
<reference key="2">
    <citation type="submission" date="2006-04" db="UniProtKB">
        <authorList>
            <person name="Bienvenut W.V."/>
        </authorList>
    </citation>
    <scope>PROTEIN SEQUENCE OF 2-18; 42-58 AND 74-89</scope>
    <scope>ACETYLATION AT SER-2</scope>
    <scope>IDENTIFICATION BY MASS SPECTROMETRY</scope>
</reference>